<reference key="1">
    <citation type="journal article" date="1990" name="Antimicrob. Agents Chemother.">
        <title>OHIO-1 beta-lactamase is part of the SHV-1 family.</title>
        <authorList>
            <person name="Shlaes D.M."/>
            <person name="Currie-Mccumber C."/>
            <person name="Hull A."/>
            <person name="Behlau I."/>
            <person name="Kron M."/>
        </authorList>
    </citation>
    <scope>NUCLEOTIDE SEQUENCE [GENOMIC DNA]</scope>
</reference>
<reference key="2">
    <citation type="journal article" date="1991" name="Biochem. J.">
        <title>A standard numbering scheme for the class A beta-lactamases.</title>
        <authorList>
            <person name="Ambler R.P."/>
            <person name="Coulson A.F."/>
            <person name="Frere J.M."/>
            <person name="Ghuysen J.M."/>
            <person name="Joris B."/>
            <person name="Forsman M."/>
            <person name="Levesque R.C."/>
            <person name="Tiraby G."/>
            <person name="Waley S.G."/>
        </authorList>
    </citation>
    <scope>AMINO ACID NUMBERING SCHEME</scope>
</reference>
<comment type="catalytic activity">
    <reaction evidence="2">
        <text>a beta-lactam + H2O = a substituted beta-amino acid</text>
        <dbReference type="Rhea" id="RHEA:20401"/>
        <dbReference type="ChEBI" id="CHEBI:15377"/>
        <dbReference type="ChEBI" id="CHEBI:35627"/>
        <dbReference type="ChEBI" id="CHEBI:140347"/>
        <dbReference type="EC" id="3.5.2.6"/>
    </reaction>
</comment>
<comment type="miscellaneous">
    <text evidence="4">The class A beta-lactamase family has a specific amino-acid numbering system, sometimes called Ambler or ABL numbering and often misspelt as Amber. A multiple sequence alignment was used to derive a consensus sequence and then the consensus was numbered taking into account insertions and deletions. This allows use of identical numbers, e.g. for active site residues, despite differences in protein length. UniProt always uses natural numbering of residues, hence there appear to be differences in numbering between this entry and some papers.</text>
</comment>
<comment type="similarity">
    <text evidence="3">Belongs to the class-A beta-lactamase family.</text>
</comment>
<organism>
    <name type="scientific">Enterobacter cloacae</name>
    <dbReference type="NCBI Taxonomy" id="550"/>
    <lineage>
        <taxon>Bacteria</taxon>
        <taxon>Pseudomonadati</taxon>
        <taxon>Pseudomonadota</taxon>
        <taxon>Gammaproteobacteria</taxon>
        <taxon>Enterobacterales</taxon>
        <taxon>Enterobacteriaceae</taxon>
        <taxon>Enterobacter</taxon>
        <taxon>Enterobacter cloacae complex</taxon>
    </lineage>
</organism>
<evidence type="ECO:0000250" key="1"/>
<evidence type="ECO:0000255" key="2">
    <source>
        <dbReference type="PROSITE-ProRule" id="PRU10101"/>
    </source>
</evidence>
<evidence type="ECO:0000305" key="3"/>
<evidence type="ECO:0000305" key="4">
    <source>
    </source>
</evidence>
<geneLocation type="plasmid">
    <name>pDS075</name>
</geneLocation>
<feature type="signal peptide">
    <location>
        <begin position="1"/>
        <end position="21"/>
    </location>
</feature>
<feature type="chain" id="PRO_0000016996" description="Beta-lactamase Ohio-1">
    <location>
        <begin position="22"/>
        <end position="286"/>
    </location>
</feature>
<feature type="active site" description="Acyl-ester intermediate" evidence="2">
    <location>
        <position position="66"/>
    </location>
</feature>
<feature type="active site" description="Proton acceptor" evidence="1">
    <location>
        <position position="164"/>
    </location>
</feature>
<feature type="binding site" evidence="1">
    <location>
        <begin position="230"/>
        <end position="232"/>
    </location>
    <ligand>
        <name>substrate</name>
    </ligand>
</feature>
<feature type="disulfide bond" evidence="1">
    <location>
        <begin position="73"/>
        <end position="119"/>
    </location>
</feature>
<sequence>MRYFRLCIISLLATLPLRVHAGPQPLEQIKLSESQLSGSVGMIEMDLARPGTLTAWRADERFPMMSTFKVVLCGAGLARVDAGDEQLERKIHYRRQDLVDYSPVSEKHLADGMTVGELCAAAITMSDNSAANLLLPAVGGPAGLTAFLRQIGDNVTRLDRWETELNEALPGDARDTTTARSMAATLRKLLTSQRLSARSQRQLLQWMVDDRVAGRLIRSVLPAGWFIADKTGAGERGARGIVALLGPNNKAERIVVIYLRDTPASMAERNQQIAGIAGALIEHWQR</sequence>
<proteinExistence type="inferred from homology"/>
<accession>P18251</accession>
<name>BLA1_ENTCL</name>
<protein>
    <recommendedName>
        <fullName>Beta-lactamase Ohio-1</fullName>
        <ecNumber>3.5.2.6</ecNumber>
    </recommendedName>
</protein>
<dbReference type="EC" id="3.5.2.6"/>
<dbReference type="EMBL" id="M33655">
    <property type="protein sequence ID" value="AAA72078.1"/>
    <property type="molecule type" value="Unassigned_DNA"/>
</dbReference>
<dbReference type="PIR" id="A44958">
    <property type="entry name" value="A44958"/>
</dbReference>
<dbReference type="SMR" id="P18251"/>
<dbReference type="DrugBank" id="DB01606">
    <property type="generic name" value="Tazobactam"/>
</dbReference>
<dbReference type="CARD" id="ARO:3006956">
    <property type="molecule name" value="OHIO-1"/>
    <property type="mechanism identifier" value="ARO:0001004"/>
    <property type="mechanism name" value="antibiotic inactivation"/>
</dbReference>
<dbReference type="GO" id="GO:0008800">
    <property type="term" value="F:beta-lactamase activity"/>
    <property type="evidence" value="ECO:0007669"/>
    <property type="project" value="UniProtKB-EC"/>
</dbReference>
<dbReference type="GO" id="GO:0030655">
    <property type="term" value="P:beta-lactam antibiotic catabolic process"/>
    <property type="evidence" value="ECO:0007669"/>
    <property type="project" value="InterPro"/>
</dbReference>
<dbReference type="GO" id="GO:0046677">
    <property type="term" value="P:response to antibiotic"/>
    <property type="evidence" value="ECO:0007669"/>
    <property type="project" value="UniProtKB-KW"/>
</dbReference>
<dbReference type="Gene3D" id="3.40.710.10">
    <property type="entry name" value="DD-peptidase/beta-lactamase superfamily"/>
    <property type="match status" value="1"/>
</dbReference>
<dbReference type="InterPro" id="IPR012338">
    <property type="entry name" value="Beta-lactam/transpept-like"/>
</dbReference>
<dbReference type="InterPro" id="IPR045155">
    <property type="entry name" value="Beta-lactam_cat"/>
</dbReference>
<dbReference type="InterPro" id="IPR000871">
    <property type="entry name" value="Beta-lactam_class-A"/>
</dbReference>
<dbReference type="InterPro" id="IPR023650">
    <property type="entry name" value="Beta-lactam_class-A_AS"/>
</dbReference>
<dbReference type="NCBIfam" id="NF033103">
    <property type="entry name" value="bla_class_A"/>
    <property type="match status" value="1"/>
</dbReference>
<dbReference type="NCBIfam" id="NF012143">
    <property type="entry name" value="SHV_LEN_OKP"/>
    <property type="match status" value="1"/>
</dbReference>
<dbReference type="PANTHER" id="PTHR35333">
    <property type="entry name" value="BETA-LACTAMASE"/>
    <property type="match status" value="1"/>
</dbReference>
<dbReference type="PANTHER" id="PTHR35333:SF3">
    <property type="entry name" value="BETA-LACTAMASE-TYPE TRANSPEPTIDASE FOLD CONTAINING PROTEIN"/>
    <property type="match status" value="1"/>
</dbReference>
<dbReference type="Pfam" id="PF13354">
    <property type="entry name" value="Beta-lactamase2"/>
    <property type="match status" value="1"/>
</dbReference>
<dbReference type="PRINTS" id="PR00118">
    <property type="entry name" value="BLACTAMASEA"/>
</dbReference>
<dbReference type="SUPFAM" id="SSF56601">
    <property type="entry name" value="beta-lactamase/transpeptidase-like"/>
    <property type="match status" value="1"/>
</dbReference>
<dbReference type="PROSITE" id="PS00146">
    <property type="entry name" value="BETA_LACTAMASE_A"/>
    <property type="match status" value="1"/>
</dbReference>
<keyword id="KW-0046">Antibiotic resistance</keyword>
<keyword id="KW-1015">Disulfide bond</keyword>
<keyword id="KW-0378">Hydrolase</keyword>
<keyword id="KW-0614">Plasmid</keyword>
<keyword id="KW-0732">Signal</keyword>